<feature type="chain" id="PRO_0000427410" description="Uncharacterized protein MT1558/MT1560">
    <location>
        <begin position="1"/>
        <end position="432"/>
    </location>
</feature>
<feature type="transmembrane region" description="Helical" evidence="1">
    <location>
        <begin position="35"/>
        <end position="55"/>
    </location>
</feature>
<feature type="transmembrane region" description="Helical" evidence="1">
    <location>
        <begin position="60"/>
        <end position="80"/>
    </location>
</feature>
<feature type="transmembrane region" description="Helical" evidence="1">
    <location>
        <begin position="112"/>
        <end position="132"/>
    </location>
</feature>
<feature type="transmembrane region" description="Helical" evidence="1">
    <location>
        <begin position="144"/>
        <end position="164"/>
    </location>
</feature>
<feature type="transmembrane region" description="Helical" evidence="1">
    <location>
        <begin position="185"/>
        <end position="205"/>
    </location>
</feature>
<feature type="transmembrane region" description="Helical" evidence="1">
    <location>
        <begin position="209"/>
        <end position="229"/>
    </location>
</feature>
<feature type="transmembrane region" description="Helical" evidence="1">
    <location>
        <begin position="242"/>
        <end position="262"/>
    </location>
</feature>
<feature type="transmembrane region" description="Helical" evidence="1">
    <location>
        <begin position="274"/>
        <end position="294"/>
    </location>
</feature>
<feature type="transmembrane region" description="Helical" evidence="1">
    <location>
        <begin position="313"/>
        <end position="333"/>
    </location>
</feature>
<feature type="transmembrane region" description="Helical" evidence="1">
    <location>
        <begin position="359"/>
        <end position="379"/>
    </location>
</feature>
<feature type="transmembrane region" description="Helical" evidence="1">
    <location>
        <begin position="384"/>
        <end position="404"/>
    </location>
</feature>
<feature type="transmembrane region" description="Helical" evidence="1">
    <location>
        <begin position="408"/>
        <end position="428"/>
    </location>
</feature>
<comment type="subcellular location">
    <subcellularLocation>
        <location evidence="2">Cell membrane</location>
        <topology evidence="2">Multi-pass membrane protein</topology>
    </subcellularLocation>
</comment>
<comment type="similarity">
    <text evidence="2">To M.tuberculosis Rv3630 and M.bovis Mb3654.</text>
</comment>
<comment type="sequence caution" evidence="2">
    <conflict type="frameshift">
        <sequence resource="EMBL-CDS" id="AAK45826"/>
    </conflict>
</comment>
<protein>
    <recommendedName>
        <fullName>Uncharacterized protein MT1558/MT1560</fullName>
    </recommendedName>
</protein>
<accession>P9WLW0</accession>
<accession>L0T9M7</accession>
<accession>P71789</accession>
<dbReference type="EMBL" id="AE000516">
    <property type="protein sequence ID" value="AAK45825.1"/>
    <property type="status" value="ALT_FRAME"/>
    <property type="molecule type" value="Genomic_DNA"/>
</dbReference>
<dbReference type="EMBL" id="AE000516">
    <property type="protein sequence ID" value="AAK45826.1"/>
    <property type="status" value="ALT_FRAME"/>
    <property type="molecule type" value="Genomic_DNA"/>
</dbReference>
<dbReference type="PIR" id="A70714">
    <property type="entry name" value="A70714"/>
</dbReference>
<dbReference type="RefSeq" id="WP_003901183.1">
    <property type="nucleotide sequence ID" value="NZ_KK341227.1"/>
</dbReference>
<dbReference type="SMR" id="P9WLW0"/>
<dbReference type="KEGG" id="mtc:MT1558"/>
<dbReference type="KEGG" id="mtc:MT1560"/>
<dbReference type="PATRIC" id="fig|83331.31.peg.1679"/>
<dbReference type="HOGENOM" id="CLU_1600916_0_0_11"/>
<dbReference type="Proteomes" id="UP000001020">
    <property type="component" value="Chromosome"/>
</dbReference>
<dbReference type="GO" id="GO:0005886">
    <property type="term" value="C:plasma membrane"/>
    <property type="evidence" value="ECO:0007669"/>
    <property type="project" value="UniProtKB-SubCell"/>
</dbReference>
<dbReference type="InterPro" id="IPR050833">
    <property type="entry name" value="Poly_Biosynth_Transport"/>
</dbReference>
<dbReference type="PANTHER" id="PTHR30250:SF11">
    <property type="entry name" value="O-ANTIGEN TRANSPORTER-RELATED"/>
    <property type="match status" value="1"/>
</dbReference>
<dbReference type="PANTHER" id="PTHR30250">
    <property type="entry name" value="PST FAMILY PREDICTED COLANIC ACID TRANSPORTER"/>
    <property type="match status" value="1"/>
</dbReference>
<gene>
    <name type="ordered locus">MT1558/MT1560</name>
</gene>
<sequence length="432" mass="44293">MYERRHERGMCDRAVEMTDVGATAAPTGPIARGSVARVGAATALAVACVYTVIYLAARDLPPACFSIFAVFWGALGIATGATHGLLQETTREVRWVRSTQIVAGHRTHPLRVAGMIGTVAAVVIAGSSPLWSRQLFVEGRWLSVGLLSVGVAGFCAQATLLGALAGVDRWTQYGSLMVTDAVIRLAVAAAAVVIGWGLAGYLWAATAGAVAWLLMLMASPTARSAASLLTPGGIATFVRGAAHSITAAGASAILVMGFPVLLKVTSDQLGAKGGAVILAVTLTRAPLLVPLSAMQGNLIAHFVDRRTQRLRALIAPALVVGGIGAVGMLAAGLTGPWLLRVGFGPDYQTGGALLAWLTAAAVAIAMLTLTGAAAVAAALHRAYLLGWVSATVASTLLLLLPMPLETRTVIALLFGPTVGIAIHVAALARRPD</sequence>
<evidence type="ECO:0000255" key="1"/>
<evidence type="ECO:0000305" key="2"/>
<name>Y1510_MYCTO</name>
<reference key="1">
    <citation type="journal article" date="2002" name="J. Bacteriol.">
        <title>Whole-genome comparison of Mycobacterium tuberculosis clinical and laboratory strains.</title>
        <authorList>
            <person name="Fleischmann R.D."/>
            <person name="Alland D."/>
            <person name="Eisen J.A."/>
            <person name="Carpenter L."/>
            <person name="White O."/>
            <person name="Peterson J.D."/>
            <person name="DeBoy R.T."/>
            <person name="Dodson R.J."/>
            <person name="Gwinn M.L."/>
            <person name="Haft D.H."/>
            <person name="Hickey E.K."/>
            <person name="Kolonay J.F."/>
            <person name="Nelson W.C."/>
            <person name="Umayam L.A."/>
            <person name="Ermolaeva M.D."/>
            <person name="Salzberg S.L."/>
            <person name="Delcher A."/>
            <person name="Utterback T.R."/>
            <person name="Weidman J.F."/>
            <person name="Khouri H.M."/>
            <person name="Gill J."/>
            <person name="Mikula A."/>
            <person name="Bishai W."/>
            <person name="Jacobs W.R. Jr."/>
            <person name="Venter J.C."/>
            <person name="Fraser C.M."/>
        </authorList>
    </citation>
    <scope>NUCLEOTIDE SEQUENCE [LARGE SCALE GENOMIC DNA]</scope>
    <source>
        <strain>CDC 1551 / Oshkosh</strain>
    </source>
</reference>
<proteinExistence type="predicted"/>
<organism>
    <name type="scientific">Mycobacterium tuberculosis (strain CDC 1551 / Oshkosh)</name>
    <dbReference type="NCBI Taxonomy" id="83331"/>
    <lineage>
        <taxon>Bacteria</taxon>
        <taxon>Bacillati</taxon>
        <taxon>Actinomycetota</taxon>
        <taxon>Actinomycetes</taxon>
        <taxon>Mycobacteriales</taxon>
        <taxon>Mycobacteriaceae</taxon>
        <taxon>Mycobacterium</taxon>
        <taxon>Mycobacterium tuberculosis complex</taxon>
    </lineage>
</organism>
<keyword id="KW-1003">Cell membrane</keyword>
<keyword id="KW-0472">Membrane</keyword>
<keyword id="KW-1185">Reference proteome</keyword>
<keyword id="KW-0812">Transmembrane</keyword>
<keyword id="KW-1133">Transmembrane helix</keyword>